<keyword id="KW-0067">ATP-binding</keyword>
<keyword id="KW-0963">Cytoplasm</keyword>
<keyword id="KW-0436">Ligase</keyword>
<keyword id="KW-0547">Nucleotide-binding</keyword>
<keyword id="KW-1185">Reference proteome</keyword>
<evidence type="ECO:0000255" key="1">
    <source>
        <dbReference type="HAMAP-Rule" id="MF_00200"/>
    </source>
</evidence>
<accession>Q8ZLI0</accession>
<name>RTCA_SALTY</name>
<gene>
    <name evidence="1" type="primary">rtcA</name>
    <name type="ordered locus">STM3518</name>
</gene>
<feature type="chain" id="PRO_0000156421" description="RNA 3'-terminal phosphate cyclase">
    <location>
        <begin position="1"/>
        <end position="339"/>
    </location>
</feature>
<feature type="active site" description="Tele-AMP-histidine intermediate" evidence="1">
    <location>
        <position position="308"/>
    </location>
</feature>
<feature type="binding site" evidence="1">
    <location>
        <position position="103"/>
    </location>
    <ligand>
        <name>ATP</name>
        <dbReference type="ChEBI" id="CHEBI:30616"/>
    </ligand>
</feature>
<feature type="binding site" evidence="1">
    <location>
        <begin position="283"/>
        <end position="287"/>
    </location>
    <ligand>
        <name>ATP</name>
        <dbReference type="ChEBI" id="CHEBI:30616"/>
    </ligand>
</feature>
<proteinExistence type="inferred from homology"/>
<comment type="function">
    <text evidence="1">Catalyzes the conversion of 3'-phosphate to a 2',3'-cyclic phosphodiester at the end of RNA. The mechanism of action of the enzyme occurs in 3 steps: (A) adenylation of the enzyme by ATP; (B) transfer of adenylate to an RNA-N3'P to produce RNA-N3'PP5'A; (C) and attack of the adjacent 2'-hydroxyl on the 3'-phosphorus in the diester linkage to produce the cyclic end product. The biological role of this enzyme is unknown but it is likely to function in some aspects of cellular RNA processing.</text>
</comment>
<comment type="catalytic activity">
    <reaction evidence="1">
        <text>a 3'-end 3'-phospho-ribonucleotide-RNA + ATP = a 3'-end 2',3'-cyclophospho-ribonucleotide-RNA + AMP + diphosphate</text>
        <dbReference type="Rhea" id="RHEA:23976"/>
        <dbReference type="Rhea" id="RHEA-COMP:10463"/>
        <dbReference type="Rhea" id="RHEA-COMP:10464"/>
        <dbReference type="ChEBI" id="CHEBI:30616"/>
        <dbReference type="ChEBI" id="CHEBI:33019"/>
        <dbReference type="ChEBI" id="CHEBI:83062"/>
        <dbReference type="ChEBI" id="CHEBI:83064"/>
        <dbReference type="ChEBI" id="CHEBI:456215"/>
        <dbReference type="EC" id="6.5.1.4"/>
    </reaction>
</comment>
<comment type="subcellular location">
    <subcellularLocation>
        <location evidence="1">Cytoplasm</location>
    </subcellularLocation>
</comment>
<comment type="similarity">
    <text evidence="1">Belongs to the RNA 3'-terminal cyclase family. Type 1 subfamily.</text>
</comment>
<sequence length="339" mass="35458">MARIIALDGAQGEGGGQILRSALSLSMITGQPFEMSGIRAGRAKPGLLRQHLTAVRAATEICGAQVNGDELGSQQLRFTPGPIRGGEYRFAIGSAGSCMLVLQTVLPALWFADGSSRVEVHGGTHNQAAPSADFICRVWEPLLARMGISQRTTLIKHGFYPAGGGAAATVVEPAASLRGLTLISRGETLRTTAEALLAAVPYHVGEREVATLEAHFPQAEKNVVALEGGCGPGNALSLMIQSEQLTELFAAFGVKGTSAEAVANQVAHEARRYLASPAAVGEHLADQLILPLALAGEGAFTVARASAHLLTNIAVVERFLPVRFSCEATESGYLVRVSD</sequence>
<dbReference type="EC" id="6.5.1.4" evidence="1"/>
<dbReference type="EMBL" id="AE006468">
    <property type="protein sequence ID" value="AAL22380.1"/>
    <property type="molecule type" value="Genomic_DNA"/>
</dbReference>
<dbReference type="RefSeq" id="NP_462421.1">
    <property type="nucleotide sequence ID" value="NC_003197.2"/>
</dbReference>
<dbReference type="RefSeq" id="WP_000101027.1">
    <property type="nucleotide sequence ID" value="NC_003197.2"/>
</dbReference>
<dbReference type="SMR" id="Q8ZLI0"/>
<dbReference type="STRING" id="99287.STM3518"/>
<dbReference type="PaxDb" id="99287-STM3518"/>
<dbReference type="GeneID" id="1255041"/>
<dbReference type="KEGG" id="stm:STM3518"/>
<dbReference type="PATRIC" id="fig|99287.12.peg.3718"/>
<dbReference type="HOGENOM" id="CLU_027882_0_0_6"/>
<dbReference type="OMA" id="WSPPIDY"/>
<dbReference type="PhylomeDB" id="Q8ZLI0"/>
<dbReference type="BioCyc" id="SENT99287:STM3518-MONOMER"/>
<dbReference type="Proteomes" id="UP000001014">
    <property type="component" value="Chromosome"/>
</dbReference>
<dbReference type="GO" id="GO:0005737">
    <property type="term" value="C:cytoplasm"/>
    <property type="evidence" value="ECO:0007669"/>
    <property type="project" value="UniProtKB-SubCell"/>
</dbReference>
<dbReference type="GO" id="GO:0005524">
    <property type="term" value="F:ATP binding"/>
    <property type="evidence" value="ECO:0007669"/>
    <property type="project" value="UniProtKB-KW"/>
</dbReference>
<dbReference type="GO" id="GO:0003963">
    <property type="term" value="F:RNA-3'-phosphate cyclase activity"/>
    <property type="evidence" value="ECO:0000318"/>
    <property type="project" value="GO_Central"/>
</dbReference>
<dbReference type="GO" id="GO:0006396">
    <property type="term" value="P:RNA processing"/>
    <property type="evidence" value="ECO:0007669"/>
    <property type="project" value="InterPro"/>
</dbReference>
<dbReference type="CDD" id="cd00874">
    <property type="entry name" value="RNA_Cyclase_Class_II"/>
    <property type="match status" value="1"/>
</dbReference>
<dbReference type="FunFam" id="3.65.10.20:FF:000002">
    <property type="entry name" value="GM19193"/>
    <property type="match status" value="1"/>
</dbReference>
<dbReference type="FunFam" id="3.30.360.20:FF:000003">
    <property type="entry name" value="RNA 3'-terminal phosphate cyclase"/>
    <property type="match status" value="1"/>
</dbReference>
<dbReference type="Gene3D" id="3.65.10.20">
    <property type="entry name" value="RNA 3'-terminal phosphate cyclase domain"/>
    <property type="match status" value="1"/>
</dbReference>
<dbReference type="Gene3D" id="3.30.360.20">
    <property type="entry name" value="RNA 3'-terminal phosphate cyclase, insert domain"/>
    <property type="match status" value="1"/>
</dbReference>
<dbReference type="HAMAP" id="MF_00200">
    <property type="entry name" value="RTC"/>
    <property type="match status" value="1"/>
</dbReference>
<dbReference type="InterPro" id="IPR013791">
    <property type="entry name" value="RNA3'-term_phos_cycl_insert"/>
</dbReference>
<dbReference type="InterPro" id="IPR023797">
    <property type="entry name" value="RNA3'_phos_cyclase_dom"/>
</dbReference>
<dbReference type="InterPro" id="IPR037136">
    <property type="entry name" value="RNA3'_phos_cyclase_dom_sf"/>
</dbReference>
<dbReference type="InterPro" id="IPR000228">
    <property type="entry name" value="RNA3'_term_phos_cyc"/>
</dbReference>
<dbReference type="InterPro" id="IPR017770">
    <property type="entry name" value="RNA3'_term_phos_cyc_type_1"/>
</dbReference>
<dbReference type="InterPro" id="IPR013792">
    <property type="entry name" value="RNA3'P_cycl/enolpyr_Trfase_a/b"/>
</dbReference>
<dbReference type="InterPro" id="IPR036553">
    <property type="entry name" value="RPTC_insert"/>
</dbReference>
<dbReference type="NCBIfam" id="NF003246">
    <property type="entry name" value="PRK04204.1-2"/>
    <property type="match status" value="1"/>
</dbReference>
<dbReference type="NCBIfam" id="NF003247">
    <property type="entry name" value="PRK04204.1-3"/>
    <property type="match status" value="1"/>
</dbReference>
<dbReference type="NCBIfam" id="TIGR03399">
    <property type="entry name" value="RNA_3prim_cycl"/>
    <property type="match status" value="1"/>
</dbReference>
<dbReference type="PANTHER" id="PTHR11096">
    <property type="entry name" value="RNA 3' TERMINAL PHOSPHATE CYCLASE"/>
    <property type="match status" value="1"/>
</dbReference>
<dbReference type="PANTHER" id="PTHR11096:SF0">
    <property type="entry name" value="RNA 3'-TERMINAL PHOSPHATE CYCLASE"/>
    <property type="match status" value="1"/>
</dbReference>
<dbReference type="Pfam" id="PF01137">
    <property type="entry name" value="RTC"/>
    <property type="match status" value="1"/>
</dbReference>
<dbReference type="Pfam" id="PF05189">
    <property type="entry name" value="RTC_insert"/>
    <property type="match status" value="1"/>
</dbReference>
<dbReference type="PIRSF" id="PIRSF005378">
    <property type="entry name" value="RNA3'_term_phos_cycl_euk"/>
    <property type="match status" value="1"/>
</dbReference>
<dbReference type="SUPFAM" id="SSF55205">
    <property type="entry name" value="EPT/RTPC-like"/>
    <property type="match status" value="2"/>
</dbReference>
<dbReference type="SUPFAM" id="SSF52913">
    <property type="entry name" value="RNA 3'-terminal phosphate cyclase, RPTC, insert domain"/>
    <property type="match status" value="1"/>
</dbReference>
<reference key="1">
    <citation type="journal article" date="2001" name="Nature">
        <title>Complete genome sequence of Salmonella enterica serovar Typhimurium LT2.</title>
        <authorList>
            <person name="McClelland M."/>
            <person name="Sanderson K.E."/>
            <person name="Spieth J."/>
            <person name="Clifton S.W."/>
            <person name="Latreille P."/>
            <person name="Courtney L."/>
            <person name="Porwollik S."/>
            <person name="Ali J."/>
            <person name="Dante M."/>
            <person name="Du F."/>
            <person name="Hou S."/>
            <person name="Layman D."/>
            <person name="Leonard S."/>
            <person name="Nguyen C."/>
            <person name="Scott K."/>
            <person name="Holmes A."/>
            <person name="Grewal N."/>
            <person name="Mulvaney E."/>
            <person name="Ryan E."/>
            <person name="Sun H."/>
            <person name="Florea L."/>
            <person name="Miller W."/>
            <person name="Stoneking T."/>
            <person name="Nhan M."/>
            <person name="Waterston R."/>
            <person name="Wilson R.K."/>
        </authorList>
    </citation>
    <scope>NUCLEOTIDE SEQUENCE [LARGE SCALE GENOMIC DNA]</scope>
    <source>
        <strain>LT2 / SGSC1412 / ATCC 700720</strain>
    </source>
</reference>
<organism>
    <name type="scientific">Salmonella typhimurium (strain LT2 / SGSC1412 / ATCC 700720)</name>
    <dbReference type="NCBI Taxonomy" id="99287"/>
    <lineage>
        <taxon>Bacteria</taxon>
        <taxon>Pseudomonadati</taxon>
        <taxon>Pseudomonadota</taxon>
        <taxon>Gammaproteobacteria</taxon>
        <taxon>Enterobacterales</taxon>
        <taxon>Enterobacteriaceae</taxon>
        <taxon>Salmonella</taxon>
    </lineage>
</organism>
<protein>
    <recommendedName>
        <fullName evidence="1">RNA 3'-terminal phosphate cyclase</fullName>
        <shortName evidence="1">RNA cyclase</shortName>
        <shortName evidence="1">RNA-3'-phosphate cyclase</shortName>
        <ecNumber evidence="1">6.5.1.4</ecNumber>
    </recommendedName>
</protein>